<name>ACP_HELHP</name>
<gene>
    <name evidence="1" type="primary">acpP</name>
    <name type="ordered locus">HH_0728</name>
</gene>
<proteinExistence type="inferred from homology"/>
<accession>Q7VI80</accession>
<dbReference type="EMBL" id="AE017125">
    <property type="protein sequence ID" value="AAP77325.1"/>
    <property type="molecule type" value="Genomic_DNA"/>
</dbReference>
<dbReference type="RefSeq" id="WP_011115570.1">
    <property type="nucleotide sequence ID" value="NC_004917.1"/>
</dbReference>
<dbReference type="SMR" id="Q7VI80"/>
<dbReference type="STRING" id="235279.HH_0728"/>
<dbReference type="KEGG" id="hhe:HH_0728"/>
<dbReference type="eggNOG" id="COG0236">
    <property type="taxonomic scope" value="Bacteria"/>
</dbReference>
<dbReference type="HOGENOM" id="CLU_108696_5_1_7"/>
<dbReference type="OrthoDB" id="9804551at2"/>
<dbReference type="UniPathway" id="UPA00094"/>
<dbReference type="Proteomes" id="UP000002495">
    <property type="component" value="Chromosome"/>
</dbReference>
<dbReference type="GO" id="GO:0005829">
    <property type="term" value="C:cytosol"/>
    <property type="evidence" value="ECO:0007669"/>
    <property type="project" value="TreeGrafter"/>
</dbReference>
<dbReference type="GO" id="GO:0016020">
    <property type="term" value="C:membrane"/>
    <property type="evidence" value="ECO:0007669"/>
    <property type="project" value="GOC"/>
</dbReference>
<dbReference type="GO" id="GO:0000035">
    <property type="term" value="F:acyl binding"/>
    <property type="evidence" value="ECO:0007669"/>
    <property type="project" value="TreeGrafter"/>
</dbReference>
<dbReference type="GO" id="GO:0000036">
    <property type="term" value="F:acyl carrier activity"/>
    <property type="evidence" value="ECO:0007669"/>
    <property type="project" value="UniProtKB-UniRule"/>
</dbReference>
<dbReference type="GO" id="GO:0009245">
    <property type="term" value="P:lipid A biosynthetic process"/>
    <property type="evidence" value="ECO:0007669"/>
    <property type="project" value="TreeGrafter"/>
</dbReference>
<dbReference type="FunFam" id="1.10.1200.10:FF:000006">
    <property type="entry name" value="Acyl carrier protein"/>
    <property type="match status" value="1"/>
</dbReference>
<dbReference type="Gene3D" id="1.10.1200.10">
    <property type="entry name" value="ACP-like"/>
    <property type="match status" value="1"/>
</dbReference>
<dbReference type="HAMAP" id="MF_01217">
    <property type="entry name" value="Acyl_carrier"/>
    <property type="match status" value="1"/>
</dbReference>
<dbReference type="InterPro" id="IPR003231">
    <property type="entry name" value="ACP"/>
</dbReference>
<dbReference type="InterPro" id="IPR036736">
    <property type="entry name" value="ACP-like_sf"/>
</dbReference>
<dbReference type="InterPro" id="IPR001633">
    <property type="entry name" value="EAL_dom"/>
</dbReference>
<dbReference type="InterPro" id="IPR009081">
    <property type="entry name" value="PP-bd_ACP"/>
</dbReference>
<dbReference type="InterPro" id="IPR006162">
    <property type="entry name" value="Ppantetheine_attach_site"/>
</dbReference>
<dbReference type="NCBIfam" id="TIGR00517">
    <property type="entry name" value="acyl_carrier"/>
    <property type="match status" value="1"/>
</dbReference>
<dbReference type="NCBIfam" id="NF002148">
    <property type="entry name" value="PRK00982.1-2"/>
    <property type="match status" value="1"/>
</dbReference>
<dbReference type="NCBIfam" id="NF002150">
    <property type="entry name" value="PRK00982.1-4"/>
    <property type="match status" value="1"/>
</dbReference>
<dbReference type="NCBIfam" id="NF002151">
    <property type="entry name" value="PRK00982.1-5"/>
    <property type="match status" value="1"/>
</dbReference>
<dbReference type="PANTHER" id="PTHR20863">
    <property type="entry name" value="ACYL CARRIER PROTEIN"/>
    <property type="match status" value="1"/>
</dbReference>
<dbReference type="PANTHER" id="PTHR20863:SF76">
    <property type="entry name" value="CARRIER DOMAIN-CONTAINING PROTEIN"/>
    <property type="match status" value="1"/>
</dbReference>
<dbReference type="Pfam" id="PF00550">
    <property type="entry name" value="PP-binding"/>
    <property type="match status" value="1"/>
</dbReference>
<dbReference type="SUPFAM" id="SSF47336">
    <property type="entry name" value="ACP-like"/>
    <property type="match status" value="1"/>
</dbReference>
<dbReference type="PROSITE" id="PS50075">
    <property type="entry name" value="CARRIER"/>
    <property type="match status" value="1"/>
</dbReference>
<dbReference type="PROSITE" id="PS00012">
    <property type="entry name" value="PHOSPHOPANTETHEINE"/>
    <property type="match status" value="1"/>
</dbReference>
<keyword id="KW-0963">Cytoplasm</keyword>
<keyword id="KW-0275">Fatty acid biosynthesis</keyword>
<keyword id="KW-0276">Fatty acid metabolism</keyword>
<keyword id="KW-0444">Lipid biosynthesis</keyword>
<keyword id="KW-0443">Lipid metabolism</keyword>
<keyword id="KW-0596">Phosphopantetheine</keyword>
<keyword id="KW-0597">Phosphoprotein</keyword>
<keyword id="KW-1185">Reference proteome</keyword>
<evidence type="ECO:0000255" key="1">
    <source>
        <dbReference type="HAMAP-Rule" id="MF_01217"/>
    </source>
</evidence>
<evidence type="ECO:0000255" key="2">
    <source>
        <dbReference type="PROSITE-ProRule" id="PRU00258"/>
    </source>
</evidence>
<protein>
    <recommendedName>
        <fullName evidence="1">Acyl carrier protein</fullName>
        <shortName evidence="1">ACP</shortName>
    </recommendedName>
</protein>
<feature type="chain" id="PRO_0000180143" description="Acyl carrier protein">
    <location>
        <begin position="1"/>
        <end position="76"/>
    </location>
</feature>
<feature type="domain" description="Carrier" evidence="2">
    <location>
        <begin position="1"/>
        <end position="76"/>
    </location>
</feature>
<feature type="modified residue" description="O-(pantetheine 4'-phosphoryl)serine" evidence="2">
    <location>
        <position position="36"/>
    </location>
</feature>
<organism>
    <name type="scientific">Helicobacter hepaticus (strain ATCC 51449 / 3B1)</name>
    <dbReference type="NCBI Taxonomy" id="235279"/>
    <lineage>
        <taxon>Bacteria</taxon>
        <taxon>Pseudomonadati</taxon>
        <taxon>Campylobacterota</taxon>
        <taxon>Epsilonproteobacteria</taxon>
        <taxon>Campylobacterales</taxon>
        <taxon>Helicobacteraceae</taxon>
        <taxon>Helicobacter</taxon>
    </lineage>
</organism>
<comment type="function">
    <text evidence="1">Carrier of the growing fatty acid chain in fatty acid biosynthesis.</text>
</comment>
<comment type="pathway">
    <text evidence="1">Lipid metabolism; fatty acid biosynthesis.</text>
</comment>
<comment type="subcellular location">
    <subcellularLocation>
        <location evidence="1">Cytoplasm</location>
    </subcellularLocation>
</comment>
<comment type="PTM">
    <text evidence="1">4'-phosphopantetheine is transferred from CoA to a specific serine of apo-ACP by AcpS. This modification is essential for activity because fatty acids are bound in thioester linkage to the sulfhydryl of the prosthetic group.</text>
</comment>
<comment type="similarity">
    <text evidence="1">Belongs to the acyl carrier protein (ACP) family.</text>
</comment>
<reference key="1">
    <citation type="journal article" date="2003" name="Proc. Natl. Acad. Sci. U.S.A.">
        <title>The complete genome sequence of the carcinogenic bacterium Helicobacter hepaticus.</title>
        <authorList>
            <person name="Suerbaum S."/>
            <person name="Josenhans C."/>
            <person name="Sterzenbach T."/>
            <person name="Drescher B."/>
            <person name="Brandt P."/>
            <person name="Bell M."/>
            <person name="Droege M."/>
            <person name="Fartmann B."/>
            <person name="Fischer H.-P."/>
            <person name="Ge Z."/>
            <person name="Hoerster A."/>
            <person name="Holland R."/>
            <person name="Klein K."/>
            <person name="Koenig J."/>
            <person name="Macko L."/>
            <person name="Mendz G.L."/>
            <person name="Nyakatura G."/>
            <person name="Schauer D.B."/>
            <person name="Shen Z."/>
            <person name="Weber J."/>
            <person name="Frosch M."/>
            <person name="Fox J.G."/>
        </authorList>
    </citation>
    <scope>NUCLEOTIDE SEQUENCE [LARGE SCALE GENOMIC DNA]</scope>
    <source>
        <strain>ATCC 51449 / 3B1</strain>
    </source>
</reference>
<sequence length="76" mass="8544">MDTFESVKAVVVEQLSVDANEVKPESRFIEDLNADSLDVVELVMALEEKFSIEIPDEEAEKIKTVKDVVAYIEANK</sequence>